<evidence type="ECO:0000255" key="1">
    <source>
        <dbReference type="PROSITE-ProRule" id="PRU00163"/>
    </source>
</evidence>
<evidence type="ECO:0000269" key="2">
    <source>
    </source>
</evidence>
<evidence type="ECO:0000269" key="3">
    <source>
    </source>
</evidence>
<evidence type="ECO:0000269" key="4">
    <source>
    </source>
</evidence>
<evidence type="ECO:0000305" key="5"/>
<dbReference type="EMBL" id="Z48149">
    <property type="protein sequence ID" value="CAA88149.1"/>
    <property type="status" value="ALT_FRAME"/>
    <property type="molecule type" value="Genomic_DNA"/>
</dbReference>
<dbReference type="EMBL" id="Z48149">
    <property type="protein sequence ID" value="CAA88150.1"/>
    <property type="status" value="ALT_FRAME"/>
    <property type="molecule type" value="Genomic_DNA"/>
</dbReference>
<dbReference type="EMBL" id="Z48149">
    <property type="protein sequence ID" value="CAA88148.1"/>
    <property type="molecule type" value="Genomic_DNA"/>
</dbReference>
<dbReference type="EMBL" id="Z74854">
    <property type="protein sequence ID" value="CAA99131.1"/>
    <property type="molecule type" value="Genomic_DNA"/>
</dbReference>
<dbReference type="EMBL" id="BK006948">
    <property type="protein sequence ID" value="DAA10671.1"/>
    <property type="molecule type" value="Genomic_DNA"/>
</dbReference>
<dbReference type="PIR" id="S51885">
    <property type="entry name" value="S51885"/>
</dbReference>
<dbReference type="RefSeq" id="NP_014529.1">
    <property type="nucleotide sequence ID" value="NM_001183366.1"/>
</dbReference>
<dbReference type="SMR" id="Q12317"/>
<dbReference type="BioGRID" id="34288">
    <property type="interactions" value="220"/>
</dbReference>
<dbReference type="ComplexPortal" id="CPX-3188">
    <property type="entry name" value="Polarisome"/>
</dbReference>
<dbReference type="DIP" id="DIP-2784N"/>
<dbReference type="FunCoup" id="Q12317">
    <property type="interactions" value="193"/>
</dbReference>
<dbReference type="IntAct" id="Q12317">
    <property type="interactions" value="1"/>
</dbReference>
<dbReference type="MINT" id="Q12317"/>
<dbReference type="STRING" id="4932.YOL112W"/>
<dbReference type="iPTMnet" id="Q12317"/>
<dbReference type="PaxDb" id="4932-YOL112W"/>
<dbReference type="PeptideAtlas" id="Q12317"/>
<dbReference type="EnsemblFungi" id="YOL112W_mRNA">
    <property type="protein sequence ID" value="YOL112W"/>
    <property type="gene ID" value="YOL112W"/>
</dbReference>
<dbReference type="GeneID" id="854037"/>
<dbReference type="KEGG" id="sce:YOL112W"/>
<dbReference type="AGR" id="SGD:S000005472"/>
<dbReference type="SGD" id="S000005472">
    <property type="gene designation" value="MSB4"/>
</dbReference>
<dbReference type="VEuPathDB" id="FungiDB:YOL112W"/>
<dbReference type="eggNOG" id="KOG2058">
    <property type="taxonomic scope" value="Eukaryota"/>
</dbReference>
<dbReference type="GeneTree" id="ENSGT00940000176552"/>
<dbReference type="HOGENOM" id="CLU_005350_12_1_1"/>
<dbReference type="InParanoid" id="Q12317"/>
<dbReference type="OMA" id="DTMIQDS"/>
<dbReference type="OrthoDB" id="294251at2759"/>
<dbReference type="BioCyc" id="YEAST:G3O-33509-MONOMER"/>
<dbReference type="BioGRID-ORCS" id="854037">
    <property type="hits" value="0 hits in 10 CRISPR screens"/>
</dbReference>
<dbReference type="PRO" id="PR:Q12317"/>
<dbReference type="Proteomes" id="UP000002311">
    <property type="component" value="Chromosome XV"/>
</dbReference>
<dbReference type="RNAct" id="Q12317">
    <property type="molecule type" value="protein"/>
</dbReference>
<dbReference type="GO" id="GO:0005935">
    <property type="term" value="C:cellular bud neck"/>
    <property type="evidence" value="ECO:0007669"/>
    <property type="project" value="UniProtKB-SubCell"/>
</dbReference>
<dbReference type="GO" id="GO:0005934">
    <property type="term" value="C:cellular bud tip"/>
    <property type="evidence" value="ECO:0000314"/>
    <property type="project" value="SGD"/>
</dbReference>
<dbReference type="GO" id="GO:0005737">
    <property type="term" value="C:cytoplasm"/>
    <property type="evidence" value="ECO:0000318"/>
    <property type="project" value="GO_Central"/>
</dbReference>
<dbReference type="GO" id="GO:0000131">
    <property type="term" value="C:incipient cellular bud site"/>
    <property type="evidence" value="ECO:0000314"/>
    <property type="project" value="SGD"/>
</dbReference>
<dbReference type="GO" id="GO:0043332">
    <property type="term" value="C:mating projection tip"/>
    <property type="evidence" value="ECO:0000314"/>
    <property type="project" value="SGD"/>
</dbReference>
<dbReference type="GO" id="GO:0005886">
    <property type="term" value="C:plasma membrane"/>
    <property type="evidence" value="ECO:0000318"/>
    <property type="project" value="GO_Central"/>
</dbReference>
<dbReference type="GO" id="GO:0000133">
    <property type="term" value="C:polarisome"/>
    <property type="evidence" value="ECO:0000314"/>
    <property type="project" value="SGD"/>
</dbReference>
<dbReference type="GO" id="GO:0005096">
    <property type="term" value="F:GTPase activator activity"/>
    <property type="evidence" value="ECO:0000314"/>
    <property type="project" value="SGD"/>
</dbReference>
<dbReference type="GO" id="GO:0030010">
    <property type="term" value="P:establishment of cell polarity"/>
    <property type="evidence" value="ECO:0000303"/>
    <property type="project" value="ComplexPortal"/>
</dbReference>
<dbReference type="GO" id="GO:0030950">
    <property type="term" value="P:establishment or maintenance of actin cytoskeleton polarity"/>
    <property type="evidence" value="ECO:0000303"/>
    <property type="project" value="ComplexPortal"/>
</dbReference>
<dbReference type="GO" id="GO:0006887">
    <property type="term" value="P:exocytosis"/>
    <property type="evidence" value="ECO:0000316"/>
    <property type="project" value="SGD"/>
</dbReference>
<dbReference type="GO" id="GO:0070649">
    <property type="term" value="P:formin-nucleated actin cable assembly"/>
    <property type="evidence" value="ECO:0000316"/>
    <property type="project" value="SGD"/>
</dbReference>
<dbReference type="GO" id="GO:0006903">
    <property type="term" value="P:vesicle targeting"/>
    <property type="evidence" value="ECO:0000303"/>
    <property type="project" value="ComplexPortal"/>
</dbReference>
<dbReference type="FunFam" id="1.10.472.80:FF:000057">
    <property type="entry name" value="GTPase-activating protein"/>
    <property type="match status" value="1"/>
</dbReference>
<dbReference type="FunFam" id="1.10.8.270:FF:000036">
    <property type="entry name" value="GTPase-activating protein GYP3"/>
    <property type="match status" value="1"/>
</dbReference>
<dbReference type="Gene3D" id="1.10.8.270">
    <property type="entry name" value="putative rabgap domain of human tbc1 domain family member 14 like domains"/>
    <property type="match status" value="1"/>
</dbReference>
<dbReference type="Gene3D" id="1.10.472.80">
    <property type="entry name" value="Ypt/Rab-GAP domain of gyp1p, domain 3"/>
    <property type="match status" value="1"/>
</dbReference>
<dbReference type="InterPro" id="IPR000195">
    <property type="entry name" value="Rab-GAP-TBC_dom"/>
</dbReference>
<dbReference type="InterPro" id="IPR035969">
    <property type="entry name" value="Rab-GAP_TBC_sf"/>
</dbReference>
<dbReference type="InterPro" id="IPR050302">
    <property type="entry name" value="Rab_GAP_TBC_domain"/>
</dbReference>
<dbReference type="PANTHER" id="PTHR47219:SF9">
    <property type="entry name" value="GTPASE ACTIVATING PROTEIN AND CENTROSOME-ASSOCIATED, ISOFORM B"/>
    <property type="match status" value="1"/>
</dbReference>
<dbReference type="PANTHER" id="PTHR47219">
    <property type="entry name" value="RAB GTPASE-ACTIVATING PROTEIN 1-LIKE"/>
    <property type="match status" value="1"/>
</dbReference>
<dbReference type="Pfam" id="PF00566">
    <property type="entry name" value="RabGAP-TBC"/>
    <property type="match status" value="2"/>
</dbReference>
<dbReference type="SMART" id="SM00164">
    <property type="entry name" value="TBC"/>
    <property type="match status" value="1"/>
</dbReference>
<dbReference type="SUPFAM" id="SSF47923">
    <property type="entry name" value="Ypt/Rab-GAP domain of gyp1p"/>
    <property type="match status" value="2"/>
</dbReference>
<dbReference type="PROSITE" id="PS50086">
    <property type="entry name" value="TBC_RABGAP"/>
    <property type="match status" value="1"/>
</dbReference>
<keyword id="KW-0963">Cytoplasm</keyword>
<keyword id="KW-0343">GTPase activation</keyword>
<keyword id="KW-1185">Reference proteome</keyword>
<feature type="chain" id="PRO_0000208020" description="GTPase-activating protein MSB4">
    <location>
        <begin position="1"/>
        <end position="492"/>
    </location>
</feature>
<feature type="domain" description="Rab-GAP TBC" evidence="1">
    <location>
        <begin position="147"/>
        <end position="367"/>
    </location>
</feature>
<feature type="mutagenesis site" description="Reduced GAP activity." evidence="3">
    <original>R</original>
    <variation>F</variation>
    <location>
        <position position="200"/>
    </location>
</feature>
<feature type="mutagenesis site" description="Reduced GAP activity." evidence="3">
    <original>R</original>
    <variation>K</variation>
    <location>
        <position position="200"/>
    </location>
</feature>
<comment type="function">
    <text evidence="2 3">Regulates exocytosis by functioning as a GAP for SEC4. Also required for efficient polarization of the actin patches.</text>
</comment>
<comment type="subcellular location">
    <subcellularLocation>
        <location evidence="2">Cytoplasm</location>
    </subcellularLocation>
    <subcellularLocation>
        <location evidence="2">Bud</location>
    </subcellularLocation>
    <subcellularLocation>
        <location evidence="2">Bud neck</location>
    </subcellularLocation>
    <text>Localizes to the presumptive bud site, the bud tip and the mother-bud neck.</text>
</comment>
<comment type="miscellaneous">
    <text evidence="4">Present with 1730 molecules/cell in log phase SD medium.</text>
</comment>
<comment type="sequence caution" evidence="5">
    <conflict type="erroneous gene model prediction">
        <sequence resource="EMBL-CDS" id="CAA88149"/>
    </conflict>
</comment>
<comment type="sequence caution" evidence="5">
    <conflict type="erroneous gene model prediction">
        <sequence resource="EMBL-CDS" id="CAA88150"/>
    </conflict>
</comment>
<organism>
    <name type="scientific">Saccharomyces cerevisiae (strain ATCC 204508 / S288c)</name>
    <name type="common">Baker's yeast</name>
    <dbReference type="NCBI Taxonomy" id="559292"/>
    <lineage>
        <taxon>Eukaryota</taxon>
        <taxon>Fungi</taxon>
        <taxon>Dikarya</taxon>
        <taxon>Ascomycota</taxon>
        <taxon>Saccharomycotina</taxon>
        <taxon>Saccharomycetes</taxon>
        <taxon>Saccharomycetales</taxon>
        <taxon>Saccharomycetaceae</taxon>
        <taxon>Saccharomyces</taxon>
    </lineage>
</organism>
<proteinExistence type="evidence at protein level"/>
<protein>
    <recommendedName>
        <fullName>GTPase-activating protein MSB4</fullName>
    </recommendedName>
    <alternativeName>
        <fullName>Multicopy suppressor of bud emergence 4</fullName>
    </alternativeName>
</protein>
<accession>Q12317</accession>
<accession>D6W1V5</accession>
<accession>Q05377</accession>
<accession>Q05378</accession>
<reference key="1">
    <citation type="journal article" date="1995" name="Yeast">
        <title>Sequence analysis of a 44 kb DNA fragment of yeast chromosome XV including the Ty1-H3 retrotransposon, the suf1(+) frameshift suppressor gene for tRNA-Gly, the yeast transfer RNA-Thr-1a and a delta element.</title>
        <authorList>
            <person name="Vandenbol M."/>
            <person name="Durand P."/>
            <person name="Portetelle D."/>
            <person name="Hilger F."/>
        </authorList>
    </citation>
    <scope>NUCLEOTIDE SEQUENCE [GENOMIC DNA]</scope>
</reference>
<reference key="2">
    <citation type="journal article" date="1997" name="Nature">
        <title>The nucleotide sequence of Saccharomyces cerevisiae chromosome XV.</title>
        <authorList>
            <person name="Dujon B."/>
            <person name="Albermann K."/>
            <person name="Aldea M."/>
            <person name="Alexandraki D."/>
            <person name="Ansorge W."/>
            <person name="Arino J."/>
            <person name="Benes V."/>
            <person name="Bohn C."/>
            <person name="Bolotin-Fukuhara M."/>
            <person name="Bordonne R."/>
            <person name="Boyer J."/>
            <person name="Camasses A."/>
            <person name="Casamayor A."/>
            <person name="Casas C."/>
            <person name="Cheret G."/>
            <person name="Cziepluch C."/>
            <person name="Daignan-Fornier B."/>
            <person name="Dang V.-D."/>
            <person name="de Haan M."/>
            <person name="Delius H."/>
            <person name="Durand P."/>
            <person name="Fairhead C."/>
            <person name="Feldmann H."/>
            <person name="Gaillon L."/>
            <person name="Galisson F."/>
            <person name="Gamo F.-J."/>
            <person name="Gancedo C."/>
            <person name="Goffeau A."/>
            <person name="Goulding S.E."/>
            <person name="Grivell L.A."/>
            <person name="Habbig B."/>
            <person name="Hand N.J."/>
            <person name="Hani J."/>
            <person name="Hattenhorst U."/>
            <person name="Hebling U."/>
            <person name="Hernando Y."/>
            <person name="Herrero E."/>
            <person name="Heumann K."/>
            <person name="Hiesel R."/>
            <person name="Hilger F."/>
            <person name="Hofmann B."/>
            <person name="Hollenberg C.P."/>
            <person name="Hughes B."/>
            <person name="Jauniaux J.-C."/>
            <person name="Kalogeropoulos A."/>
            <person name="Katsoulou C."/>
            <person name="Kordes E."/>
            <person name="Lafuente M.J."/>
            <person name="Landt O."/>
            <person name="Louis E.J."/>
            <person name="Maarse A.C."/>
            <person name="Madania A."/>
            <person name="Mannhaupt G."/>
            <person name="Marck C."/>
            <person name="Martin R.P."/>
            <person name="Mewes H.-W."/>
            <person name="Michaux G."/>
            <person name="Paces V."/>
            <person name="Parle-McDermott A.G."/>
            <person name="Pearson B.M."/>
            <person name="Perrin A."/>
            <person name="Pettersson B."/>
            <person name="Poch O."/>
            <person name="Pohl T.M."/>
            <person name="Poirey R."/>
            <person name="Portetelle D."/>
            <person name="Pujol A."/>
            <person name="Purnelle B."/>
            <person name="Ramezani Rad M."/>
            <person name="Rechmann S."/>
            <person name="Schwager C."/>
            <person name="Schweizer M."/>
            <person name="Sor F."/>
            <person name="Sterky F."/>
            <person name="Tarassov I.A."/>
            <person name="Teodoru C."/>
            <person name="Tettelin H."/>
            <person name="Thierry A."/>
            <person name="Tobiasch E."/>
            <person name="Tzermia M."/>
            <person name="Uhlen M."/>
            <person name="Unseld M."/>
            <person name="Valens M."/>
            <person name="Vandenbol M."/>
            <person name="Vetter I."/>
            <person name="Vlcek C."/>
            <person name="Voet M."/>
            <person name="Volckaert G."/>
            <person name="Voss H."/>
            <person name="Wambutt R."/>
            <person name="Wedler H."/>
            <person name="Wiemann S."/>
            <person name="Winsor B."/>
            <person name="Wolfe K.H."/>
            <person name="Zollner A."/>
            <person name="Zumstein E."/>
            <person name="Kleine K."/>
        </authorList>
    </citation>
    <scope>NUCLEOTIDE SEQUENCE [LARGE SCALE GENOMIC DNA]</scope>
    <source>
        <strain>ATCC 204508 / S288c</strain>
    </source>
</reference>
<reference key="3">
    <citation type="journal article" date="2014" name="G3 (Bethesda)">
        <title>The reference genome sequence of Saccharomyces cerevisiae: Then and now.</title>
        <authorList>
            <person name="Engel S.R."/>
            <person name="Dietrich F.S."/>
            <person name="Fisk D.G."/>
            <person name="Binkley G."/>
            <person name="Balakrishnan R."/>
            <person name="Costanzo M.C."/>
            <person name="Dwight S.S."/>
            <person name="Hitz B.C."/>
            <person name="Karra K."/>
            <person name="Nash R.S."/>
            <person name="Weng S."/>
            <person name="Wong E.D."/>
            <person name="Lloyd P."/>
            <person name="Skrzypek M.S."/>
            <person name="Miyasato S.R."/>
            <person name="Simison M."/>
            <person name="Cherry J.M."/>
        </authorList>
    </citation>
    <scope>GENOME REANNOTATION</scope>
    <source>
        <strain>ATCC 204508 / S288c</strain>
    </source>
</reference>
<reference key="4">
    <citation type="journal article" date="2000" name="Mol. Biol. Cell">
        <title>Identification of novel, evolutionarily conserved Cdc42p-interacting proteins and of redundant pathways linking Cdc24p and Cdc42p to actin polarization in yeast.</title>
        <authorList>
            <person name="Bi E."/>
            <person name="Chiavetta J.B."/>
            <person name="Chen H."/>
            <person name="Chen G.-C."/>
            <person name="Chan C.S.M."/>
            <person name="Pringle J.R."/>
        </authorList>
    </citation>
    <scope>FUNCTION</scope>
    <scope>SUBCELLULAR LOCATION</scope>
</reference>
<reference key="5">
    <citation type="journal article" date="2003" name="J. Cell Biol.">
        <title>The GAP activity of Msb3p and Msb4p for the Rab GTPase Sec4p is required for efficient exocytosis and actin organization.</title>
        <authorList>
            <person name="Gao X.D."/>
            <person name="Albert S."/>
            <person name="Tcheperegine S.E."/>
            <person name="Burd C.G."/>
            <person name="Gallwitz D."/>
            <person name="Bi E."/>
        </authorList>
    </citation>
    <scope>FUNCTION</scope>
    <scope>MUTAGENESIS OF ARG-200</scope>
</reference>
<reference key="6">
    <citation type="journal article" date="2003" name="Nature">
        <title>Global analysis of protein expression in yeast.</title>
        <authorList>
            <person name="Ghaemmaghami S."/>
            <person name="Huh W.-K."/>
            <person name="Bower K."/>
            <person name="Howson R.W."/>
            <person name="Belle A."/>
            <person name="Dephoure N."/>
            <person name="O'Shea E.K."/>
            <person name="Weissman J.S."/>
        </authorList>
    </citation>
    <scope>LEVEL OF PROTEIN EXPRESSION [LARGE SCALE ANALYSIS]</scope>
</reference>
<name>MSB4_YEAST</name>
<gene>
    <name type="primary">MSB4</name>
    <name type="ordered locus">YOL112W</name>
    <name type="ORF">HRC492</name>
</gene>
<sequence>MIMSSTMSTEAALVPNESVFDTVSSFNEDDANYSVLDLYDDDDEGDDSSTVERKEILTTRELEKAKAFTSLIMADPENFDRYGFSKKGYFISQEEYDKWWTEYNRYTERRKKKWENFLLKNKIELHNDNPLVYPARTDELSKFVRKGIPAEWRGNAWWYFAGGQRQLDANVGVYDRLKSDCREGAVSGKDMEAIERDLYRTFPDNIHFHKESFQNGEPAIIRSLRRVLMAFSVYDKTIGYCQSMNFLVGLLLLFMEEEKAFWMLVIITGKYLPGVYESDLEGANVDQGVLVLCIKEYLPEIWSHIESSYMNGNGSTDQISGPASGEEYLCRLPTLTLCTASWFMSCFVGVVPIETTLRIWDCLFYEESHFLFKVALGILKLSESEFLESKSQKLFRQYSSYTFGGSNDSDSTFKRLKNKIKTQEEADMEILQVIQNFPKRLLNPNDIFEKVLMKKKVALNGITQEKIDRGREYVAMARNRQRASSRPKERRK</sequence>